<protein>
    <recommendedName>
        <fullName evidence="4">NAC domain-containing protein 45</fullName>
        <shortName evidence="4">ONAC045</shortName>
    </recommendedName>
</protein>
<name>NAC45_ORYSJ</name>
<evidence type="ECO:0000255" key="1">
    <source>
        <dbReference type="PROSITE-ProRule" id="PRU00353"/>
    </source>
</evidence>
<evidence type="ECO:0000269" key="2">
    <source>
    </source>
</evidence>
<evidence type="ECO:0000269" key="3">
    <source>
    </source>
</evidence>
<evidence type="ECO:0000303" key="4">
    <source>
    </source>
</evidence>
<evidence type="ECO:0000312" key="5">
    <source>
        <dbReference type="EMBL" id="ABA91280.1"/>
    </source>
</evidence>
<evidence type="ECO:0000312" key="6">
    <source>
        <dbReference type="EMBL" id="BAF27474.1"/>
    </source>
</evidence>
<evidence type="ECO:0000312" key="7">
    <source>
        <dbReference type="EMBL" id="EAZ17268.1"/>
    </source>
</evidence>
<gene>
    <name evidence="4" type="primary">NAC45</name>
    <name evidence="6" type="ordered locus">Os11g0127600</name>
    <name evidence="5" type="ordered locus">LOC_Os11g03370</name>
    <name evidence="7" type="ORF">OsJ_32787</name>
</gene>
<dbReference type="EMBL" id="KP033191">
    <property type="protein sequence ID" value="AJO53627.1"/>
    <property type="molecule type" value="mRNA"/>
</dbReference>
<dbReference type="EMBL" id="DP000010">
    <property type="protein sequence ID" value="ABA91280.1"/>
    <property type="molecule type" value="Genomic_DNA"/>
</dbReference>
<dbReference type="EMBL" id="AP008217">
    <property type="protein sequence ID" value="BAF27474.1"/>
    <property type="molecule type" value="Genomic_DNA"/>
</dbReference>
<dbReference type="EMBL" id="AP014967">
    <property type="protein sequence ID" value="BAT12487.1"/>
    <property type="molecule type" value="Genomic_DNA"/>
</dbReference>
<dbReference type="EMBL" id="CM000148">
    <property type="protein sequence ID" value="EAZ17268.1"/>
    <property type="molecule type" value="Genomic_DNA"/>
</dbReference>
<dbReference type="EMBL" id="AK067922">
    <property type="protein sequence ID" value="BAG90667.1"/>
    <property type="molecule type" value="mRNA"/>
</dbReference>
<dbReference type="RefSeq" id="XP_015615868.1">
    <property type="nucleotide sequence ID" value="XM_015760382.1"/>
</dbReference>
<dbReference type="SMR" id="Q2RB33"/>
<dbReference type="FunCoup" id="Q2RB33">
    <property type="interactions" value="4"/>
</dbReference>
<dbReference type="STRING" id="39947.Q2RB33"/>
<dbReference type="PaxDb" id="39947-Q2RB33"/>
<dbReference type="EnsemblPlants" id="Os11t0127600-01">
    <property type="protein sequence ID" value="Os11t0127600-01"/>
    <property type="gene ID" value="Os11g0127600"/>
</dbReference>
<dbReference type="Gramene" id="Os11t0127600-01">
    <property type="protein sequence ID" value="Os11t0127600-01"/>
    <property type="gene ID" value="Os11g0127600"/>
</dbReference>
<dbReference type="KEGG" id="dosa:Os11g0127600"/>
<dbReference type="eggNOG" id="ENOG502SHAM">
    <property type="taxonomic scope" value="Eukaryota"/>
</dbReference>
<dbReference type="HOGENOM" id="CLU_035664_6_2_1"/>
<dbReference type="InParanoid" id="Q2RB33"/>
<dbReference type="OMA" id="EFYANHL"/>
<dbReference type="OrthoDB" id="596384at2759"/>
<dbReference type="Proteomes" id="UP000000763">
    <property type="component" value="Chromosome 11"/>
</dbReference>
<dbReference type="Proteomes" id="UP000007752">
    <property type="component" value="Chromosome 11"/>
</dbReference>
<dbReference type="Proteomes" id="UP000059680">
    <property type="component" value="Chromosome 11"/>
</dbReference>
<dbReference type="ExpressionAtlas" id="Q2RB33">
    <property type="expression patterns" value="baseline and differential"/>
</dbReference>
<dbReference type="GO" id="GO:0005634">
    <property type="term" value="C:nucleus"/>
    <property type="evidence" value="ECO:0000314"/>
    <property type="project" value="UniProtKB"/>
</dbReference>
<dbReference type="GO" id="GO:0003677">
    <property type="term" value="F:DNA binding"/>
    <property type="evidence" value="ECO:0007669"/>
    <property type="project" value="UniProtKB-KW"/>
</dbReference>
<dbReference type="GO" id="GO:0045893">
    <property type="term" value="P:positive regulation of DNA-templated transcription"/>
    <property type="evidence" value="ECO:0000314"/>
    <property type="project" value="UniProtKB"/>
</dbReference>
<dbReference type="GO" id="GO:0009651">
    <property type="term" value="P:response to salt stress"/>
    <property type="evidence" value="ECO:0000314"/>
    <property type="project" value="UniProtKB"/>
</dbReference>
<dbReference type="GO" id="GO:0009414">
    <property type="term" value="P:response to water deprivation"/>
    <property type="evidence" value="ECO:0000314"/>
    <property type="project" value="UniProtKB"/>
</dbReference>
<dbReference type="FunFam" id="2.170.150.80:FF:000006">
    <property type="entry name" value="NAC domain-containing protein 100-like"/>
    <property type="match status" value="1"/>
</dbReference>
<dbReference type="Gene3D" id="2.170.150.80">
    <property type="entry name" value="NAC domain"/>
    <property type="match status" value="1"/>
</dbReference>
<dbReference type="InterPro" id="IPR003441">
    <property type="entry name" value="NAC-dom"/>
</dbReference>
<dbReference type="InterPro" id="IPR036093">
    <property type="entry name" value="NAC_dom_sf"/>
</dbReference>
<dbReference type="PANTHER" id="PTHR31744:SF62">
    <property type="entry name" value="NAC DOMAIN-CONTAINING PROTEIN 77"/>
    <property type="match status" value="1"/>
</dbReference>
<dbReference type="PANTHER" id="PTHR31744">
    <property type="entry name" value="PROTEIN CUP-SHAPED COTYLEDON 2-RELATED"/>
    <property type="match status" value="1"/>
</dbReference>
<dbReference type="Pfam" id="PF02365">
    <property type="entry name" value="NAM"/>
    <property type="match status" value="1"/>
</dbReference>
<dbReference type="SUPFAM" id="SSF101941">
    <property type="entry name" value="NAC domain"/>
    <property type="match status" value="1"/>
</dbReference>
<dbReference type="PROSITE" id="PS51005">
    <property type="entry name" value="NAC"/>
    <property type="match status" value="1"/>
</dbReference>
<reference key="1">
    <citation type="submission" date="2014-10" db="EMBL/GenBank/DDBJ databases">
        <title>Isolation of NAC-related genes from rice.</title>
        <authorList>
            <person name="Suh E.J."/>
            <person name="Lee S."/>
            <person name="Kim K.H."/>
            <person name="Yoon H.J."/>
        </authorList>
    </citation>
    <scope>NUCLEOTIDE SEQUENCE [MRNA]</scope>
    <source>
        <strain>cv. Dongjin</strain>
    </source>
</reference>
<reference key="2">
    <citation type="journal article" date="2005" name="BMC Biol.">
        <title>The sequence of rice chromosomes 11 and 12, rich in disease resistance genes and recent gene duplications.</title>
        <authorList>
            <consortium name="The rice chromosomes 11 and 12 sequencing consortia"/>
        </authorList>
    </citation>
    <scope>NUCLEOTIDE SEQUENCE [LARGE SCALE GENOMIC DNA]</scope>
    <source>
        <strain>cv. Nipponbare</strain>
    </source>
</reference>
<reference key="3">
    <citation type="journal article" date="2005" name="Nature">
        <title>The map-based sequence of the rice genome.</title>
        <authorList>
            <consortium name="International rice genome sequencing project (IRGSP)"/>
        </authorList>
    </citation>
    <scope>NUCLEOTIDE SEQUENCE [LARGE SCALE GENOMIC DNA]</scope>
    <source>
        <strain>cv. Nipponbare</strain>
    </source>
</reference>
<reference key="4">
    <citation type="journal article" date="2008" name="Nucleic Acids Res.">
        <title>The rice annotation project database (RAP-DB): 2008 update.</title>
        <authorList>
            <consortium name="The rice annotation project (RAP)"/>
        </authorList>
    </citation>
    <scope>GENOME REANNOTATION</scope>
    <source>
        <strain>cv. Nipponbare</strain>
    </source>
</reference>
<reference key="5">
    <citation type="journal article" date="2013" name="Rice">
        <title>Improvement of the Oryza sativa Nipponbare reference genome using next generation sequence and optical map data.</title>
        <authorList>
            <person name="Kawahara Y."/>
            <person name="de la Bastide M."/>
            <person name="Hamilton J.P."/>
            <person name="Kanamori H."/>
            <person name="McCombie W.R."/>
            <person name="Ouyang S."/>
            <person name="Schwartz D.C."/>
            <person name="Tanaka T."/>
            <person name="Wu J."/>
            <person name="Zhou S."/>
            <person name="Childs K.L."/>
            <person name="Davidson R.M."/>
            <person name="Lin H."/>
            <person name="Quesada-Ocampo L."/>
            <person name="Vaillancourt B."/>
            <person name="Sakai H."/>
            <person name="Lee S.S."/>
            <person name="Kim J."/>
            <person name="Numa H."/>
            <person name="Itoh T."/>
            <person name="Buell C.R."/>
            <person name="Matsumoto T."/>
        </authorList>
    </citation>
    <scope>GENOME REANNOTATION</scope>
    <source>
        <strain>cv. Nipponbare</strain>
    </source>
</reference>
<reference key="6">
    <citation type="journal article" date="2005" name="PLoS Biol.">
        <title>The genomes of Oryza sativa: a history of duplications.</title>
        <authorList>
            <person name="Yu J."/>
            <person name="Wang J."/>
            <person name="Lin W."/>
            <person name="Li S."/>
            <person name="Li H."/>
            <person name="Zhou J."/>
            <person name="Ni P."/>
            <person name="Dong W."/>
            <person name="Hu S."/>
            <person name="Zeng C."/>
            <person name="Zhang J."/>
            <person name="Zhang Y."/>
            <person name="Li R."/>
            <person name="Xu Z."/>
            <person name="Li S."/>
            <person name="Li X."/>
            <person name="Zheng H."/>
            <person name="Cong L."/>
            <person name="Lin L."/>
            <person name="Yin J."/>
            <person name="Geng J."/>
            <person name="Li G."/>
            <person name="Shi J."/>
            <person name="Liu J."/>
            <person name="Lv H."/>
            <person name="Li J."/>
            <person name="Wang J."/>
            <person name="Deng Y."/>
            <person name="Ran L."/>
            <person name="Shi X."/>
            <person name="Wang X."/>
            <person name="Wu Q."/>
            <person name="Li C."/>
            <person name="Ren X."/>
            <person name="Wang J."/>
            <person name="Wang X."/>
            <person name="Li D."/>
            <person name="Liu D."/>
            <person name="Zhang X."/>
            <person name="Ji Z."/>
            <person name="Zhao W."/>
            <person name="Sun Y."/>
            <person name="Zhang Z."/>
            <person name="Bao J."/>
            <person name="Han Y."/>
            <person name="Dong L."/>
            <person name="Ji J."/>
            <person name="Chen P."/>
            <person name="Wu S."/>
            <person name="Liu J."/>
            <person name="Xiao Y."/>
            <person name="Bu D."/>
            <person name="Tan J."/>
            <person name="Yang L."/>
            <person name="Ye C."/>
            <person name="Zhang J."/>
            <person name="Xu J."/>
            <person name="Zhou Y."/>
            <person name="Yu Y."/>
            <person name="Zhang B."/>
            <person name="Zhuang S."/>
            <person name="Wei H."/>
            <person name="Liu B."/>
            <person name="Lei M."/>
            <person name="Yu H."/>
            <person name="Li Y."/>
            <person name="Xu H."/>
            <person name="Wei S."/>
            <person name="He X."/>
            <person name="Fang L."/>
            <person name="Zhang Z."/>
            <person name="Zhang Y."/>
            <person name="Huang X."/>
            <person name="Su Z."/>
            <person name="Tong W."/>
            <person name="Li J."/>
            <person name="Tong Z."/>
            <person name="Li S."/>
            <person name="Ye J."/>
            <person name="Wang L."/>
            <person name="Fang L."/>
            <person name="Lei T."/>
            <person name="Chen C.-S."/>
            <person name="Chen H.-C."/>
            <person name="Xu Z."/>
            <person name="Li H."/>
            <person name="Huang H."/>
            <person name="Zhang F."/>
            <person name="Xu H."/>
            <person name="Li N."/>
            <person name="Zhao C."/>
            <person name="Li S."/>
            <person name="Dong L."/>
            <person name="Huang Y."/>
            <person name="Li L."/>
            <person name="Xi Y."/>
            <person name="Qi Q."/>
            <person name="Li W."/>
            <person name="Zhang B."/>
            <person name="Hu W."/>
            <person name="Zhang Y."/>
            <person name="Tian X."/>
            <person name="Jiao Y."/>
            <person name="Liang X."/>
            <person name="Jin J."/>
            <person name="Gao L."/>
            <person name="Zheng W."/>
            <person name="Hao B."/>
            <person name="Liu S.-M."/>
            <person name="Wang W."/>
            <person name="Yuan L."/>
            <person name="Cao M."/>
            <person name="McDermott J."/>
            <person name="Samudrala R."/>
            <person name="Wang J."/>
            <person name="Wong G.K.-S."/>
            <person name="Yang H."/>
        </authorList>
    </citation>
    <scope>NUCLEOTIDE SEQUENCE [LARGE SCALE GENOMIC DNA]</scope>
    <source>
        <strain>cv. Nipponbare</strain>
    </source>
</reference>
<reference key="7">
    <citation type="journal article" date="2003" name="Science">
        <title>Collection, mapping, and annotation of over 28,000 cDNA clones from japonica rice.</title>
        <authorList>
            <consortium name="The rice full-length cDNA consortium"/>
        </authorList>
    </citation>
    <scope>NUCLEOTIDE SEQUENCE [LARGE SCALE MRNA]</scope>
    <source>
        <strain>cv. Nipponbare</strain>
    </source>
</reference>
<reference key="8">
    <citation type="journal article" date="2003" name="DNA Res.">
        <title>Comprehensive analysis of NAC family genes in Oryza sativa and Arabidopsis thaliana.</title>
        <authorList>
            <person name="Ooka H."/>
            <person name="Satoh K."/>
            <person name="Doi K."/>
            <person name="Nagata T."/>
            <person name="Otomo Y."/>
            <person name="Murakami K."/>
            <person name="Matsubara K."/>
            <person name="Osato N."/>
            <person name="Kawai J."/>
            <person name="Carninci P."/>
            <person name="Hayashizaki Y."/>
            <person name="Suzuki K."/>
            <person name="Kojima K."/>
            <person name="Takahara Y."/>
            <person name="Yamamoto K."/>
            <person name="Kikuchi S."/>
        </authorList>
    </citation>
    <scope>GENE FAMILY</scope>
    <scope>NOMENCLATURE</scope>
</reference>
<reference key="9">
    <citation type="journal article" date="2008" name="Mol. Genet. Genomics">
        <title>Systematic sequence analysis and identification of tissue-specific or stress-responsive genes of NAC transcription factor family in rice.</title>
        <authorList>
            <person name="Fang Y."/>
            <person name="You J."/>
            <person name="Xie K."/>
            <person name="Xie W."/>
            <person name="Xiong L."/>
        </authorList>
    </citation>
    <scope>TISSUE SPECIFICITY</scope>
    <scope>INDUCTION</scope>
</reference>
<reference key="10">
    <citation type="journal article" date="2009" name="Biochem. Biophys. Res. Commun.">
        <title>Overexpression of a NAC transcription factor enhances rice drought and salt tolerance.</title>
        <authorList>
            <person name="Zheng X."/>
            <person name="Chen B."/>
            <person name="Lu G."/>
            <person name="Han B."/>
        </authorList>
    </citation>
    <scope>FUNCTION</scope>
    <scope>SUBCELLULAR LOCATION</scope>
    <scope>TISSUE SPECIFICITY</scope>
    <scope>INDUCTION</scope>
</reference>
<sequence length="359" mass="39689">MVETSTSLVKLEQDGSLFLPPGFRFHPTDAEVILSYLLQKFLNPSFTSLPIGEVDLNKCEPWDLPSKAKMGEKEWYFFSHKDMKYPTGMRTNRATKEGYWKATGKDREIFNLQPTSYGGSSNNKNNKQLVGMKKTLVFYMGRAPKGTKTNWVMHEFRLHANLHNDNPNLRLNLKDEWVVCKVFHKKGDDREAINKQQAQAAAVDQYSAGTPNNGSSVEAGDDDDDLFQLDSIIDPSIYFSNSSAANILSAPPNMSNSVVAANYGASTTTTGTASAGSFQQQPNYCSLINKSISSSNVSSWNNMPPPPPVAEGGVHGIGSSYSLQHQAAMVKALRDVIRLPNPLGMPQYKLDDAYLWDSS</sequence>
<accession>Q2RB33</accession>
<accession>A0A0C5CGS5</accession>
<keyword id="KW-0010">Activator</keyword>
<keyword id="KW-0238">DNA-binding</keyword>
<keyword id="KW-0539">Nucleus</keyword>
<keyword id="KW-1185">Reference proteome</keyword>
<keyword id="KW-0346">Stress response</keyword>
<keyword id="KW-0804">Transcription</keyword>
<keyword id="KW-0805">Transcription regulation</keyword>
<proteinExistence type="evidence at transcript level"/>
<feature type="chain" id="PRO_0000442725" description="NAC domain-containing protein 45">
    <location>
        <begin position="1"/>
        <end position="359"/>
    </location>
</feature>
<feature type="domain" description="NAC" evidence="1">
    <location>
        <begin position="19"/>
        <end position="185"/>
    </location>
</feature>
<feature type="DNA-binding region" evidence="1">
    <location>
        <begin position="130"/>
        <end position="191"/>
    </location>
</feature>
<comment type="function">
    <text evidence="3">Transcription activator involved in responses to drought stress and salt stress. Transactivates the stress response genes LEA19 and PM19L.</text>
</comment>
<comment type="subcellular location">
    <subcellularLocation>
        <location evidence="1 3">Nucleus</location>
    </subcellularLocation>
</comment>
<comment type="tissue specificity">
    <text evidence="2 3">Expressed in roots (PubMed:18813954, PubMed:19135985). Expressed at low levels in leaves, stems and panicles (PubMed:19135985).</text>
</comment>
<comment type="induction">
    <text evidence="2 3">Induced by salt and cold stresses (PubMed:18813954, PubMed:19135985). Induced by drought stress (PubMed:19135985).</text>
</comment>
<comment type="domain">
    <text evidence="1">The NAC domain includes a DNA binding domain and a dimerization domain.</text>
</comment>
<organism>
    <name type="scientific">Oryza sativa subsp. japonica</name>
    <name type="common">Rice</name>
    <dbReference type="NCBI Taxonomy" id="39947"/>
    <lineage>
        <taxon>Eukaryota</taxon>
        <taxon>Viridiplantae</taxon>
        <taxon>Streptophyta</taxon>
        <taxon>Embryophyta</taxon>
        <taxon>Tracheophyta</taxon>
        <taxon>Spermatophyta</taxon>
        <taxon>Magnoliopsida</taxon>
        <taxon>Liliopsida</taxon>
        <taxon>Poales</taxon>
        <taxon>Poaceae</taxon>
        <taxon>BOP clade</taxon>
        <taxon>Oryzoideae</taxon>
        <taxon>Oryzeae</taxon>
        <taxon>Oryzinae</taxon>
        <taxon>Oryza</taxon>
        <taxon>Oryza sativa</taxon>
    </lineage>
</organism>